<feature type="initiator methionine" description="Removed" evidence="1">
    <location>
        <position position="1"/>
    </location>
</feature>
<feature type="chain" id="PRO_0000123155" description="Small ribosomal subunit protein uS11">
    <location>
        <begin position="2"/>
        <end position="129"/>
    </location>
</feature>
<name>RS11_HAEIN</name>
<evidence type="ECO:0000250" key="1"/>
<evidence type="ECO:0000255" key="2">
    <source>
        <dbReference type="HAMAP-Rule" id="MF_01310"/>
    </source>
</evidence>
<evidence type="ECO:0000305" key="3"/>
<accession>P44379</accession>
<organism>
    <name type="scientific">Haemophilus influenzae (strain ATCC 51907 / DSM 11121 / KW20 / Rd)</name>
    <dbReference type="NCBI Taxonomy" id="71421"/>
    <lineage>
        <taxon>Bacteria</taxon>
        <taxon>Pseudomonadati</taxon>
        <taxon>Pseudomonadota</taxon>
        <taxon>Gammaproteobacteria</taxon>
        <taxon>Pasteurellales</taxon>
        <taxon>Pasteurellaceae</taxon>
        <taxon>Haemophilus</taxon>
    </lineage>
</organism>
<protein>
    <recommendedName>
        <fullName evidence="2">Small ribosomal subunit protein uS11</fullName>
    </recommendedName>
    <alternativeName>
        <fullName evidence="3">30S ribosomal protein S11</fullName>
    </alternativeName>
</protein>
<comment type="function">
    <text evidence="2">Located on the platform of the 30S subunit, it bridges several disparate RNA helices of the 16S rRNA. Forms part of the Shine-Dalgarno cleft in the 70S ribosome.</text>
</comment>
<comment type="subunit">
    <text evidence="2">Part of the 30S ribosomal subunit. Interacts with proteins S7 and S18. Binds to IF-3.</text>
</comment>
<comment type="similarity">
    <text evidence="2">Belongs to the universal ribosomal protein uS11 family.</text>
</comment>
<dbReference type="EMBL" id="L42023">
    <property type="protein sequence ID" value="AAC22459.1"/>
    <property type="molecule type" value="Genomic_DNA"/>
</dbReference>
<dbReference type="PIR" id="I64094">
    <property type="entry name" value="I64094"/>
</dbReference>
<dbReference type="RefSeq" id="NP_438960.1">
    <property type="nucleotide sequence ID" value="NC_000907.1"/>
</dbReference>
<dbReference type="SMR" id="P44379"/>
<dbReference type="STRING" id="71421.HI_0800"/>
<dbReference type="EnsemblBacteria" id="AAC22459">
    <property type="protein sequence ID" value="AAC22459"/>
    <property type="gene ID" value="HI_0800"/>
</dbReference>
<dbReference type="KEGG" id="hin:HI_0800"/>
<dbReference type="PATRIC" id="fig|71421.8.peg.840"/>
<dbReference type="eggNOG" id="COG0100">
    <property type="taxonomic scope" value="Bacteria"/>
</dbReference>
<dbReference type="HOGENOM" id="CLU_072439_5_0_6"/>
<dbReference type="OrthoDB" id="9806415at2"/>
<dbReference type="PhylomeDB" id="P44379"/>
<dbReference type="BioCyc" id="HINF71421:G1GJ1-841-MONOMER"/>
<dbReference type="Proteomes" id="UP000000579">
    <property type="component" value="Chromosome"/>
</dbReference>
<dbReference type="GO" id="GO:0022627">
    <property type="term" value="C:cytosolic small ribosomal subunit"/>
    <property type="evidence" value="ECO:0000318"/>
    <property type="project" value="GO_Central"/>
</dbReference>
<dbReference type="GO" id="GO:0019843">
    <property type="term" value="F:rRNA binding"/>
    <property type="evidence" value="ECO:0007669"/>
    <property type="project" value="UniProtKB-UniRule"/>
</dbReference>
<dbReference type="GO" id="GO:0003735">
    <property type="term" value="F:structural constituent of ribosome"/>
    <property type="evidence" value="ECO:0000318"/>
    <property type="project" value="GO_Central"/>
</dbReference>
<dbReference type="GO" id="GO:0006412">
    <property type="term" value="P:translation"/>
    <property type="evidence" value="ECO:0000318"/>
    <property type="project" value="GO_Central"/>
</dbReference>
<dbReference type="FunFam" id="3.30.420.80:FF:000001">
    <property type="entry name" value="30S ribosomal protein S11"/>
    <property type="match status" value="1"/>
</dbReference>
<dbReference type="Gene3D" id="3.30.420.80">
    <property type="entry name" value="Ribosomal protein S11"/>
    <property type="match status" value="1"/>
</dbReference>
<dbReference type="HAMAP" id="MF_01310">
    <property type="entry name" value="Ribosomal_uS11"/>
    <property type="match status" value="1"/>
</dbReference>
<dbReference type="InterPro" id="IPR001971">
    <property type="entry name" value="Ribosomal_uS11"/>
</dbReference>
<dbReference type="InterPro" id="IPR019981">
    <property type="entry name" value="Ribosomal_uS11_bac-type"/>
</dbReference>
<dbReference type="InterPro" id="IPR018102">
    <property type="entry name" value="Ribosomal_uS11_CS"/>
</dbReference>
<dbReference type="InterPro" id="IPR036967">
    <property type="entry name" value="Ribosomal_uS11_sf"/>
</dbReference>
<dbReference type="NCBIfam" id="NF003698">
    <property type="entry name" value="PRK05309.1"/>
    <property type="match status" value="1"/>
</dbReference>
<dbReference type="NCBIfam" id="TIGR03632">
    <property type="entry name" value="uS11_bact"/>
    <property type="match status" value="1"/>
</dbReference>
<dbReference type="PANTHER" id="PTHR11759">
    <property type="entry name" value="40S RIBOSOMAL PROTEIN S14/30S RIBOSOMAL PROTEIN S11"/>
    <property type="match status" value="1"/>
</dbReference>
<dbReference type="Pfam" id="PF00411">
    <property type="entry name" value="Ribosomal_S11"/>
    <property type="match status" value="1"/>
</dbReference>
<dbReference type="PIRSF" id="PIRSF002131">
    <property type="entry name" value="Ribosomal_S11"/>
    <property type="match status" value="1"/>
</dbReference>
<dbReference type="SUPFAM" id="SSF53137">
    <property type="entry name" value="Translational machinery components"/>
    <property type="match status" value="1"/>
</dbReference>
<dbReference type="PROSITE" id="PS00054">
    <property type="entry name" value="RIBOSOMAL_S11"/>
    <property type="match status" value="1"/>
</dbReference>
<gene>
    <name evidence="2" type="primary">rpsK</name>
    <name evidence="2" type="synonym">rps11</name>
    <name type="ordered locus">HI_0800</name>
</gene>
<reference key="1">
    <citation type="journal article" date="1995" name="Science">
        <title>Whole-genome random sequencing and assembly of Haemophilus influenzae Rd.</title>
        <authorList>
            <person name="Fleischmann R.D."/>
            <person name="Adams M.D."/>
            <person name="White O."/>
            <person name="Clayton R.A."/>
            <person name="Kirkness E.F."/>
            <person name="Kerlavage A.R."/>
            <person name="Bult C.J."/>
            <person name="Tomb J.-F."/>
            <person name="Dougherty B.A."/>
            <person name="Merrick J.M."/>
            <person name="McKenney K."/>
            <person name="Sutton G.G."/>
            <person name="FitzHugh W."/>
            <person name="Fields C.A."/>
            <person name="Gocayne J.D."/>
            <person name="Scott J.D."/>
            <person name="Shirley R."/>
            <person name="Liu L.-I."/>
            <person name="Glodek A."/>
            <person name="Kelley J.M."/>
            <person name="Weidman J.F."/>
            <person name="Phillips C.A."/>
            <person name="Spriggs T."/>
            <person name="Hedblom E."/>
            <person name="Cotton M.D."/>
            <person name="Utterback T.R."/>
            <person name="Hanna M.C."/>
            <person name="Nguyen D.T."/>
            <person name="Saudek D.M."/>
            <person name="Brandon R.C."/>
            <person name="Fine L.D."/>
            <person name="Fritchman J.L."/>
            <person name="Fuhrmann J.L."/>
            <person name="Geoghagen N.S.M."/>
            <person name="Gnehm C.L."/>
            <person name="McDonald L.A."/>
            <person name="Small K.V."/>
            <person name="Fraser C.M."/>
            <person name="Smith H.O."/>
            <person name="Venter J.C."/>
        </authorList>
    </citation>
    <scope>NUCLEOTIDE SEQUENCE [LARGE SCALE GENOMIC DNA]</scope>
    <source>
        <strain>ATCC 51907 / DSM 11121 / KW20 / Rd</strain>
    </source>
</reference>
<keyword id="KW-1185">Reference proteome</keyword>
<keyword id="KW-0687">Ribonucleoprotein</keyword>
<keyword id="KW-0689">Ribosomal protein</keyword>
<keyword id="KW-0694">RNA-binding</keyword>
<keyword id="KW-0699">rRNA-binding</keyword>
<sequence length="129" mass="13984">MAKTPVRARKRVKKQVVDGVRHIHASFNNTIVTITDRQGNALAWATAGGSGFRGSRKSTPFAAQVAAERCAEIVKEFGLKNLEVMVKGPGPGRESTIRALNAAGFRITNITDVTPIPHNGCRPPKKRRV</sequence>
<proteinExistence type="inferred from homology"/>